<reference key="1">
    <citation type="journal article" date="2000" name="Mol. Gen. Genet.">
        <title>Molecular analysis of the NAC gene family in rice.</title>
        <authorList>
            <person name="Kikuchi K."/>
            <person name="Ueguchi-Tanaka M."/>
            <person name="Yoshida K.T."/>
            <person name="Nagato Y."/>
            <person name="Matsusoka M."/>
            <person name="Hirano H.-Y."/>
        </authorList>
    </citation>
    <scope>NUCLEOTIDE SEQUENCE [MRNA]</scope>
    <scope>TISSUE SPECIFICITY</scope>
</reference>
<reference key="2">
    <citation type="journal article" date="2009" name="Sigmul Saengmyeong Gong Haghoeji">
        <title>Structural analysis of expressed sequence tags in immature seed of Oryza sativa L.</title>
        <authorList>
            <person name="Yoon U.H."/>
            <person name="Kim Y.H."/>
        </authorList>
    </citation>
    <scope>NUCLEOTIDE SEQUENCE [MRNA]</scope>
    <source>
        <tissue>Seed</tissue>
    </source>
</reference>
<reference key="3">
    <citation type="journal article" date="2002" name="Nature">
        <title>The genome sequence and structure of rice chromosome 1.</title>
        <authorList>
            <person name="Sasaki T."/>
            <person name="Matsumoto T."/>
            <person name="Yamamoto K."/>
            <person name="Sakata K."/>
            <person name="Baba T."/>
            <person name="Katayose Y."/>
            <person name="Wu J."/>
            <person name="Niimura Y."/>
            <person name="Cheng Z."/>
            <person name="Nagamura Y."/>
            <person name="Antonio B.A."/>
            <person name="Kanamori H."/>
            <person name="Hosokawa S."/>
            <person name="Masukawa M."/>
            <person name="Arikawa K."/>
            <person name="Chiden Y."/>
            <person name="Hayashi M."/>
            <person name="Okamoto M."/>
            <person name="Ando T."/>
            <person name="Aoki H."/>
            <person name="Arita K."/>
            <person name="Hamada M."/>
            <person name="Harada C."/>
            <person name="Hijishita S."/>
            <person name="Honda M."/>
            <person name="Ichikawa Y."/>
            <person name="Idonuma A."/>
            <person name="Iijima M."/>
            <person name="Ikeda M."/>
            <person name="Ikeno M."/>
            <person name="Ito S."/>
            <person name="Ito T."/>
            <person name="Ito Y."/>
            <person name="Ito Y."/>
            <person name="Iwabuchi A."/>
            <person name="Kamiya K."/>
            <person name="Karasawa W."/>
            <person name="Katagiri S."/>
            <person name="Kikuta A."/>
            <person name="Kobayashi N."/>
            <person name="Kono I."/>
            <person name="Machita K."/>
            <person name="Maehara T."/>
            <person name="Mizuno H."/>
            <person name="Mizubayashi T."/>
            <person name="Mukai Y."/>
            <person name="Nagasaki H."/>
            <person name="Nakashima M."/>
            <person name="Nakama Y."/>
            <person name="Nakamichi Y."/>
            <person name="Nakamura M."/>
            <person name="Namiki N."/>
            <person name="Negishi M."/>
            <person name="Ohta I."/>
            <person name="Ono N."/>
            <person name="Saji S."/>
            <person name="Sakai K."/>
            <person name="Shibata M."/>
            <person name="Shimokawa T."/>
            <person name="Shomura A."/>
            <person name="Song J."/>
            <person name="Takazaki Y."/>
            <person name="Terasawa K."/>
            <person name="Tsuji K."/>
            <person name="Waki K."/>
            <person name="Yamagata H."/>
            <person name="Yamane H."/>
            <person name="Yoshiki S."/>
            <person name="Yoshihara R."/>
            <person name="Yukawa K."/>
            <person name="Zhong H."/>
            <person name="Iwama H."/>
            <person name="Endo T."/>
            <person name="Ito H."/>
            <person name="Hahn J.H."/>
            <person name="Kim H.-I."/>
            <person name="Eun M.-Y."/>
            <person name="Yano M."/>
            <person name="Jiang J."/>
            <person name="Gojobori T."/>
        </authorList>
    </citation>
    <scope>NUCLEOTIDE SEQUENCE [LARGE SCALE GENOMIC DNA]</scope>
    <source>
        <strain>cv. Nipponbare</strain>
    </source>
</reference>
<reference key="4">
    <citation type="journal article" date="2005" name="Nature">
        <title>The map-based sequence of the rice genome.</title>
        <authorList>
            <consortium name="International rice genome sequencing project (IRGSP)"/>
        </authorList>
    </citation>
    <scope>NUCLEOTIDE SEQUENCE [LARGE SCALE GENOMIC DNA]</scope>
    <source>
        <strain>cv. Nipponbare</strain>
    </source>
</reference>
<reference key="5">
    <citation type="journal article" date="2013" name="Rice">
        <title>Improvement of the Oryza sativa Nipponbare reference genome using next generation sequence and optical map data.</title>
        <authorList>
            <person name="Kawahara Y."/>
            <person name="de la Bastide M."/>
            <person name="Hamilton J.P."/>
            <person name="Kanamori H."/>
            <person name="McCombie W.R."/>
            <person name="Ouyang S."/>
            <person name="Schwartz D.C."/>
            <person name="Tanaka T."/>
            <person name="Wu J."/>
            <person name="Zhou S."/>
            <person name="Childs K.L."/>
            <person name="Davidson R.M."/>
            <person name="Lin H."/>
            <person name="Quesada-Ocampo L."/>
            <person name="Vaillancourt B."/>
            <person name="Sakai H."/>
            <person name="Lee S.S."/>
            <person name="Kim J."/>
            <person name="Numa H."/>
            <person name="Itoh T."/>
            <person name="Buell C.R."/>
            <person name="Matsumoto T."/>
        </authorList>
    </citation>
    <scope>GENOME REANNOTATION</scope>
    <source>
        <strain>cv. Nipponbare</strain>
    </source>
</reference>
<reference key="6">
    <citation type="journal article" date="2005" name="PLoS Biol.">
        <title>The genomes of Oryza sativa: a history of duplications.</title>
        <authorList>
            <person name="Yu J."/>
            <person name="Wang J."/>
            <person name="Lin W."/>
            <person name="Li S."/>
            <person name="Li H."/>
            <person name="Zhou J."/>
            <person name="Ni P."/>
            <person name="Dong W."/>
            <person name="Hu S."/>
            <person name="Zeng C."/>
            <person name="Zhang J."/>
            <person name="Zhang Y."/>
            <person name="Li R."/>
            <person name="Xu Z."/>
            <person name="Li S."/>
            <person name="Li X."/>
            <person name="Zheng H."/>
            <person name="Cong L."/>
            <person name="Lin L."/>
            <person name="Yin J."/>
            <person name="Geng J."/>
            <person name="Li G."/>
            <person name="Shi J."/>
            <person name="Liu J."/>
            <person name="Lv H."/>
            <person name="Li J."/>
            <person name="Wang J."/>
            <person name="Deng Y."/>
            <person name="Ran L."/>
            <person name="Shi X."/>
            <person name="Wang X."/>
            <person name="Wu Q."/>
            <person name="Li C."/>
            <person name="Ren X."/>
            <person name="Wang J."/>
            <person name="Wang X."/>
            <person name="Li D."/>
            <person name="Liu D."/>
            <person name="Zhang X."/>
            <person name="Ji Z."/>
            <person name="Zhao W."/>
            <person name="Sun Y."/>
            <person name="Zhang Z."/>
            <person name="Bao J."/>
            <person name="Han Y."/>
            <person name="Dong L."/>
            <person name="Ji J."/>
            <person name="Chen P."/>
            <person name="Wu S."/>
            <person name="Liu J."/>
            <person name="Xiao Y."/>
            <person name="Bu D."/>
            <person name="Tan J."/>
            <person name="Yang L."/>
            <person name="Ye C."/>
            <person name="Zhang J."/>
            <person name="Xu J."/>
            <person name="Zhou Y."/>
            <person name="Yu Y."/>
            <person name="Zhang B."/>
            <person name="Zhuang S."/>
            <person name="Wei H."/>
            <person name="Liu B."/>
            <person name="Lei M."/>
            <person name="Yu H."/>
            <person name="Li Y."/>
            <person name="Xu H."/>
            <person name="Wei S."/>
            <person name="He X."/>
            <person name="Fang L."/>
            <person name="Zhang Z."/>
            <person name="Zhang Y."/>
            <person name="Huang X."/>
            <person name="Su Z."/>
            <person name="Tong W."/>
            <person name="Li J."/>
            <person name="Tong Z."/>
            <person name="Li S."/>
            <person name="Ye J."/>
            <person name="Wang L."/>
            <person name="Fang L."/>
            <person name="Lei T."/>
            <person name="Chen C.-S."/>
            <person name="Chen H.-C."/>
            <person name="Xu Z."/>
            <person name="Li H."/>
            <person name="Huang H."/>
            <person name="Zhang F."/>
            <person name="Xu H."/>
            <person name="Li N."/>
            <person name="Zhao C."/>
            <person name="Li S."/>
            <person name="Dong L."/>
            <person name="Huang Y."/>
            <person name="Li L."/>
            <person name="Xi Y."/>
            <person name="Qi Q."/>
            <person name="Li W."/>
            <person name="Zhang B."/>
            <person name="Hu W."/>
            <person name="Zhang Y."/>
            <person name="Tian X."/>
            <person name="Jiao Y."/>
            <person name="Liang X."/>
            <person name="Jin J."/>
            <person name="Gao L."/>
            <person name="Zheng W."/>
            <person name="Hao B."/>
            <person name="Liu S.-M."/>
            <person name="Wang W."/>
            <person name="Yuan L."/>
            <person name="Cao M."/>
            <person name="McDermott J."/>
            <person name="Samudrala R."/>
            <person name="Wang J."/>
            <person name="Wong G.K.-S."/>
            <person name="Yang H."/>
        </authorList>
    </citation>
    <scope>NUCLEOTIDE SEQUENCE [LARGE SCALE GENOMIC DNA]</scope>
    <source>
        <strain>cv. Nipponbare</strain>
    </source>
</reference>
<reference key="7">
    <citation type="journal article" date="2003" name="Science">
        <title>Collection, mapping, and annotation of over 28,000 cDNA clones from japonica rice.</title>
        <authorList>
            <consortium name="The rice full-length cDNA consortium"/>
        </authorList>
    </citation>
    <scope>NUCLEOTIDE SEQUENCE [LARGE SCALE MRNA]</scope>
    <source>
        <strain>cv. Nipponbare</strain>
    </source>
</reference>
<reference key="8">
    <citation type="journal article" date="2003" name="DNA Res.">
        <title>Comprehensive analysis of NAC family genes in Oryza sativa and Arabidopsis thaliana.</title>
        <authorList>
            <person name="Ooka H."/>
            <person name="Satoh K."/>
            <person name="Doi K."/>
            <person name="Nagata T."/>
            <person name="Otomo Y."/>
            <person name="Murakami K."/>
            <person name="Matsubara K."/>
            <person name="Osato N."/>
            <person name="Kawai J."/>
            <person name="Carninci P."/>
            <person name="Hayashizaki Y."/>
            <person name="Suzuki K."/>
            <person name="Kojima K."/>
            <person name="Takahara Y."/>
            <person name="Yamamoto K."/>
            <person name="Kikuchi S."/>
        </authorList>
    </citation>
    <scope>GENE FAMILY</scope>
    <scope>NOMENCLATURE</scope>
</reference>
<reference key="9">
    <citation type="journal article" date="2007" name="Nucleic Acids Res.">
        <title>Exploring membrane-associated NAC transcription factors in Arabidopsis: implications for membrane biology in genome regulation.</title>
        <authorList>
            <person name="Kim S.Y."/>
            <person name="Kim S.G."/>
            <person name="Kim Y.S."/>
            <person name="Seo P.J."/>
            <person name="Bae M."/>
            <person name="Yoon H.K."/>
            <person name="Park C.M."/>
        </authorList>
    </citation>
    <scope>GENE FAMILY</scope>
    <scope>NOMENCLATURE</scope>
</reference>
<reference key="10">
    <citation type="journal article" date="2008" name="Mol. Genet. Genomics">
        <title>Systematic sequence analysis and identification of tissue-specific or stress-responsive genes of NAC transcription factor family in rice.</title>
        <authorList>
            <person name="Fang Y."/>
            <person name="You J."/>
            <person name="Xie K."/>
            <person name="Xie W."/>
            <person name="Xiong L."/>
        </authorList>
    </citation>
    <scope>INDUCTION</scope>
</reference>
<reference key="11">
    <citation type="journal article" date="2020" name="Plant Biotechnol. J.">
        <title>A membrane-associated NAC transcription factor OsNTL3 is involved in thermotolerance in rice.</title>
        <authorList>
            <person name="Liu X.H."/>
            <person name="Lyu Y.S."/>
            <person name="Yang W."/>
            <person name="Yang Z.T."/>
            <person name="Lu S.J."/>
            <person name="Liu J.X."/>
        </authorList>
    </citation>
    <scope>FUNCTION</scope>
    <scope>SUBCELLULAR LOCATION</scope>
    <scope>INDUCTION</scope>
    <scope>DISRUPTION PHENOTYPE</scope>
</reference>
<comment type="function">
    <text evidence="6">Transcription activator involved in heat and endoplasmic reticulum (ER) stress responses (PubMed:31733092). Regulates the expression of genes involved in ER protein folding and heat stress-responsive genes (PubMed:31733092). Binds directly to the promoter of BZIP74 and regulates its expression in response to heat stress (PubMed:31733092).</text>
</comment>
<comment type="subcellular location">
    <subcellularLocation>
        <location evidence="2 6">Nucleus</location>
    </subcellularLocation>
    <subcellularLocation>
        <location evidence="6">Cell membrane</location>
        <topology evidence="1">Single-pass membrane protein</topology>
    </subcellularLocation>
    <text evidence="6">NTL3 relocates from plasma membrane to nucleus in response to heat and endoplasmic reticulum (ER) stresses.</text>
</comment>
<comment type="tissue specificity">
    <text evidence="4">Widely expressed.</text>
</comment>
<comment type="induction">
    <text evidence="5 6">Induced by salt stress (PubMed:18813954, PubMed:31733092). Induced by cold stress (PubMed:18813954). Induced by dithiothreitol- and tunicamycin-induced endoplasmic reticulum (ER) stress response (PubMed:31733092). Induced by heat shock (PubMed:31733092).</text>
</comment>
<comment type="domain">
    <text evidence="2">The NAC domain includes a DNA binding domain and a dimerization domain.</text>
</comment>
<comment type="disruption phenotype">
    <text evidence="6">No visible phenotype under normal growth conditions, but mutant plants exhibit hypersensitivity to heat stress.</text>
</comment>
<sequence length="489" mass="54694">MESLRDMVLPPGFGFHPKDTELISHYLKKKIHGQKIEYEIIPEVDIYKHEPWDLPAKCDVPTQDNKWHFFAARDRKYPNGSRSNRATVAGYWKSTGKDRAIKMGKQTIGTKKTLVFHEGRPPTGRRTEWIMHEYYIDERECQACPDMKDAYVLCRITKRNDWIPGNGNELDNSDPHPEPYDAPPSVISTEQLNPAAEPVVGVEAAPVTVAEPDGVTTSAITANIPSPSDDINLDDWLNELFDPFFDPEQSLASADLSPDEQNVESSNVGALAPKVEQDYSSPNENVVDDTEYLLPEDVYNILHPGTDDFNMLQNPLDQYPIQYATDVWSGIQKEELWSPQANAEPSQSNEAADNGIIRRYRSMKTPETSVPQFKGKTQAKMRVGINKMATSSSESINQTIKFENSGRLVEHQKNQAHDVASTKRSDAGKPSTELSSNRGFLRGIRNAFAGCSDARWNMILVAGFAIGVAVVALHIGQRLGLSQRDQQHT</sequence>
<protein>
    <recommendedName>
        <fullName evidence="8">NAC domain-containing protein 74</fullName>
        <shortName evidence="8">ONAC074</shortName>
    </recommendedName>
    <alternativeName>
        <fullName evidence="7">OsNAC8</fullName>
    </alternativeName>
    <alternativeName>
        <fullName evidence="9">Protein NTM1-like 3</fullName>
        <shortName evidence="9">OsNTL3</shortName>
    </alternativeName>
</protein>
<keyword id="KW-0010">Activator</keyword>
<keyword id="KW-1003">Cell membrane</keyword>
<keyword id="KW-0238">DNA-binding</keyword>
<keyword id="KW-0472">Membrane</keyword>
<keyword id="KW-0539">Nucleus</keyword>
<keyword id="KW-1185">Reference proteome</keyword>
<keyword id="KW-0346">Stress response</keyword>
<keyword id="KW-0804">Transcription</keyword>
<keyword id="KW-0805">Transcription regulation</keyword>
<keyword id="KW-0812">Transmembrane</keyword>
<keyword id="KW-1133">Transmembrane helix</keyword>
<keyword id="KW-0834">Unfolded protein response</keyword>
<evidence type="ECO:0000255" key="1"/>
<evidence type="ECO:0000255" key="2">
    <source>
        <dbReference type="PROSITE-ProRule" id="PRU00353"/>
    </source>
</evidence>
<evidence type="ECO:0000256" key="3">
    <source>
        <dbReference type="SAM" id="MobiDB-lite"/>
    </source>
</evidence>
<evidence type="ECO:0000269" key="4">
    <source>
    </source>
</evidence>
<evidence type="ECO:0000269" key="5">
    <source>
    </source>
</evidence>
<evidence type="ECO:0000269" key="6">
    <source>
    </source>
</evidence>
<evidence type="ECO:0000303" key="7">
    <source>
    </source>
</evidence>
<evidence type="ECO:0000303" key="8">
    <source>
    </source>
</evidence>
<evidence type="ECO:0000303" key="9">
    <source>
    </source>
</evidence>
<evidence type="ECO:0000305" key="10"/>
<evidence type="ECO:0000312" key="11">
    <source>
        <dbReference type="EMBL" id="BAA92400.1"/>
    </source>
</evidence>
<evidence type="ECO:0000312" key="12">
    <source>
        <dbReference type="EMBL" id="BAB03447.1"/>
    </source>
</evidence>
<evidence type="ECO:0000312" key="13">
    <source>
        <dbReference type="EMBL" id="BAS71425.1"/>
    </source>
</evidence>
<evidence type="ECO:0000312" key="14">
    <source>
        <dbReference type="EMBL" id="EEE54276.1"/>
    </source>
</evidence>
<gene>
    <name evidence="8" type="primary">NAC074</name>
    <name evidence="7" type="synonym">NAC8</name>
    <name evidence="9" type="synonym">NTL3</name>
    <name evidence="13" type="ordered locus">Os01g0261200</name>
    <name evidence="10" type="ordered locus">LOC_Os01g15640</name>
    <name evidence="14" type="ORF">OsJ_01182</name>
    <name evidence="11" type="ORF">P0469E09.5</name>
    <name evidence="12" type="ORF">P0699D11.24</name>
</gene>
<feature type="chain" id="PRO_0000132321" description="NAC domain-containing protein 74">
    <location>
        <begin position="1"/>
        <end position="489"/>
    </location>
</feature>
<feature type="transmembrane region" description="Helical" evidence="1">
    <location>
        <begin position="456"/>
        <end position="476"/>
    </location>
</feature>
<feature type="domain" description="NAC" evidence="2">
    <location>
        <begin position="9"/>
        <end position="159"/>
    </location>
</feature>
<feature type="DNA-binding region" evidence="2">
    <location>
        <begin position="108"/>
        <end position="165"/>
    </location>
</feature>
<feature type="region of interest" description="Disordered" evidence="3">
    <location>
        <begin position="413"/>
        <end position="435"/>
    </location>
</feature>
<feature type="compositionally biased region" description="Basic and acidic residues" evidence="3">
    <location>
        <begin position="413"/>
        <end position="427"/>
    </location>
</feature>
<organism>
    <name type="scientific">Oryza sativa subsp. japonica</name>
    <name type="common">Rice</name>
    <dbReference type="NCBI Taxonomy" id="39947"/>
    <lineage>
        <taxon>Eukaryota</taxon>
        <taxon>Viridiplantae</taxon>
        <taxon>Streptophyta</taxon>
        <taxon>Embryophyta</taxon>
        <taxon>Tracheophyta</taxon>
        <taxon>Spermatophyta</taxon>
        <taxon>Magnoliopsida</taxon>
        <taxon>Liliopsida</taxon>
        <taxon>Poales</taxon>
        <taxon>Poaceae</taxon>
        <taxon>BOP clade</taxon>
        <taxon>Oryzoideae</taxon>
        <taxon>Oryzeae</taxon>
        <taxon>Oryzinae</taxon>
        <taxon>Oryza</taxon>
        <taxon>Oryza sativa</taxon>
    </lineage>
</organism>
<dbReference type="EMBL" id="AB028187">
    <property type="protein sequence ID" value="BAA89802.1"/>
    <property type="molecule type" value="mRNA"/>
</dbReference>
<dbReference type="EMBL" id="GU120347">
    <property type="protein sequence ID" value="ADR66981.1"/>
    <property type="molecule type" value="mRNA"/>
</dbReference>
<dbReference type="EMBL" id="AP001366">
    <property type="protein sequence ID" value="BAA92400.1"/>
    <property type="molecule type" value="Genomic_DNA"/>
</dbReference>
<dbReference type="EMBL" id="AP002817">
    <property type="protein sequence ID" value="BAB03447.1"/>
    <property type="molecule type" value="Genomic_DNA"/>
</dbReference>
<dbReference type="EMBL" id="AP008207">
    <property type="protein sequence ID" value="BAF04562.1"/>
    <property type="molecule type" value="Genomic_DNA"/>
</dbReference>
<dbReference type="EMBL" id="AP014957">
    <property type="protein sequence ID" value="BAS71425.1"/>
    <property type="molecule type" value="Genomic_DNA"/>
</dbReference>
<dbReference type="EMBL" id="CM000138">
    <property type="protein sequence ID" value="EEE54276.1"/>
    <property type="molecule type" value="Genomic_DNA"/>
</dbReference>
<dbReference type="EMBL" id="AK102808">
    <property type="protein sequence ID" value="BAG95726.1"/>
    <property type="molecule type" value="mRNA"/>
</dbReference>
<dbReference type="RefSeq" id="XP_015649784.1">
    <property type="nucleotide sequence ID" value="XM_015794298.1"/>
</dbReference>
<dbReference type="SMR" id="Q7GCL7"/>
<dbReference type="FunCoup" id="Q7GCL7">
    <property type="interactions" value="207"/>
</dbReference>
<dbReference type="STRING" id="39947.Q7GCL7"/>
<dbReference type="PaxDb" id="39947-Q7GCL7"/>
<dbReference type="EnsemblPlants" id="Os01t0261200-01">
    <property type="protein sequence ID" value="Os01t0261200-01"/>
    <property type="gene ID" value="Os01g0261200"/>
</dbReference>
<dbReference type="Gramene" id="Os01t0261200-01">
    <property type="protein sequence ID" value="Os01t0261200-01"/>
    <property type="gene ID" value="Os01g0261200"/>
</dbReference>
<dbReference type="KEGG" id="dosa:Os01g0261200"/>
<dbReference type="eggNOG" id="ENOG502QYZR">
    <property type="taxonomic scope" value="Eukaryota"/>
</dbReference>
<dbReference type="HOGENOM" id="CLU_038104_0_0_1"/>
<dbReference type="InParanoid" id="Q7GCL7"/>
<dbReference type="OMA" id="IDERECQ"/>
<dbReference type="OrthoDB" id="623685at2759"/>
<dbReference type="Proteomes" id="UP000000763">
    <property type="component" value="Chromosome 1"/>
</dbReference>
<dbReference type="Proteomes" id="UP000007752">
    <property type="component" value="Chromosome 1"/>
</dbReference>
<dbReference type="Proteomes" id="UP000059680">
    <property type="component" value="Chromosome 1"/>
</dbReference>
<dbReference type="ExpressionAtlas" id="Q7GCL7">
    <property type="expression patterns" value="baseline and differential"/>
</dbReference>
<dbReference type="GO" id="GO:0005634">
    <property type="term" value="C:nucleus"/>
    <property type="evidence" value="ECO:0007669"/>
    <property type="project" value="UniProtKB-SubCell"/>
</dbReference>
<dbReference type="GO" id="GO:0005886">
    <property type="term" value="C:plasma membrane"/>
    <property type="evidence" value="ECO:0007669"/>
    <property type="project" value="UniProtKB-SubCell"/>
</dbReference>
<dbReference type="GO" id="GO:0003677">
    <property type="term" value="F:DNA binding"/>
    <property type="evidence" value="ECO:0007669"/>
    <property type="project" value="UniProtKB-KW"/>
</dbReference>
<dbReference type="GO" id="GO:0006355">
    <property type="term" value="P:regulation of DNA-templated transcription"/>
    <property type="evidence" value="ECO:0007669"/>
    <property type="project" value="InterPro"/>
</dbReference>
<dbReference type="GO" id="GO:0006986">
    <property type="term" value="P:response to unfolded protein"/>
    <property type="evidence" value="ECO:0007669"/>
    <property type="project" value="UniProtKB-KW"/>
</dbReference>
<dbReference type="FunFam" id="2.170.150.80:FF:000002">
    <property type="entry name" value="Nac domain-containing protein 86"/>
    <property type="match status" value="1"/>
</dbReference>
<dbReference type="Gene3D" id="2.170.150.80">
    <property type="entry name" value="NAC domain"/>
    <property type="match status" value="1"/>
</dbReference>
<dbReference type="InterPro" id="IPR003441">
    <property type="entry name" value="NAC-dom"/>
</dbReference>
<dbReference type="InterPro" id="IPR036093">
    <property type="entry name" value="NAC_dom_sf"/>
</dbReference>
<dbReference type="PANTHER" id="PTHR31744:SF235">
    <property type="entry name" value="NAC DOMAIN-CONTAINING PROTEIN"/>
    <property type="match status" value="1"/>
</dbReference>
<dbReference type="PANTHER" id="PTHR31744">
    <property type="entry name" value="PROTEIN CUP-SHAPED COTYLEDON 2-RELATED"/>
    <property type="match status" value="1"/>
</dbReference>
<dbReference type="Pfam" id="PF02365">
    <property type="entry name" value="NAM"/>
    <property type="match status" value="1"/>
</dbReference>
<dbReference type="SUPFAM" id="SSF101941">
    <property type="entry name" value="NAC domain"/>
    <property type="match status" value="1"/>
</dbReference>
<dbReference type="PROSITE" id="PS51005">
    <property type="entry name" value="NAC"/>
    <property type="match status" value="1"/>
</dbReference>
<proteinExistence type="evidence at transcript level"/>
<accession>Q7GCL7</accession>
<accession>Q0JNW6</accession>
<accession>Q9LDX0</accession>
<name>NAC74_ORYSJ</name>